<proteinExistence type="predicted"/>
<name>AK40L_HUMAN</name>
<dbReference type="EMBL" id="AK000701">
    <property type="protein sequence ID" value="BAA91328.1"/>
    <property type="status" value="ALT_SEQ"/>
    <property type="molecule type" value="mRNA"/>
</dbReference>
<dbReference type="EMBL" id="AK000670">
    <property type="status" value="NOT_ANNOTATED_CDS"/>
    <property type="molecule type" value="mRNA"/>
</dbReference>
<dbReference type="EMBL" id="AK222717">
    <property type="protein sequence ID" value="BAD96437.1"/>
    <property type="status" value="ALT_SEQ"/>
    <property type="molecule type" value="mRNA"/>
</dbReference>
<dbReference type="EMBL" id="CH471109">
    <property type="protein sequence ID" value="EAW94582.1"/>
    <property type="status" value="ALT_SEQ"/>
    <property type="molecule type" value="Genomic_DNA"/>
</dbReference>
<dbReference type="EMBL" id="BC128165">
    <property type="status" value="NOT_ANNOTATED_CDS"/>
    <property type="molecule type" value="mRNA"/>
</dbReference>
<dbReference type="EMBL" id="BC128166">
    <property type="status" value="NOT_ANNOTATED_CDS"/>
    <property type="molecule type" value="mRNA"/>
</dbReference>
<dbReference type="CCDS" id="CCDS86616.1"/>
<dbReference type="RefSeq" id="NP_001345612.1">
    <property type="nucleotide sequence ID" value="NM_001358683.3"/>
</dbReference>
<dbReference type="STRING" id="9606.ENSP00000494384"/>
<dbReference type="BioMuta" id="HGNC:26080"/>
<dbReference type="jPOST" id="Q53H64"/>
<dbReference type="MassIVE" id="Q53H64"/>
<dbReference type="PeptideAtlas" id="Q53H64"/>
<dbReference type="ProteomicsDB" id="62496"/>
<dbReference type="Ensembl" id="ENST00000450727.6">
    <property type="protein sequence ID" value="ENSP00000494384.1"/>
    <property type="gene ID" value="ENSG00000167117.10"/>
</dbReference>
<dbReference type="GeneID" id="55018"/>
<dbReference type="MANE-Select" id="ENST00000450727.6">
    <property type="protein sequence ID" value="ENSP00000494384.1"/>
    <property type="RefSeq nucleotide sequence ID" value="NM_001358683.3"/>
    <property type="RefSeq protein sequence ID" value="NP_001345612.1"/>
</dbReference>
<dbReference type="AGR" id="HGNC:26080"/>
<dbReference type="GeneCards" id="ANKRD40CL"/>
<dbReference type="HGNC" id="HGNC:26080">
    <property type="gene designation" value="ANKRD40CL"/>
</dbReference>
<dbReference type="HPA" id="ENSG00000167117">
    <property type="expression patterns" value="Tissue enriched (intestine)"/>
</dbReference>
<dbReference type="neXtProt" id="NX_Q53H64"/>
<dbReference type="OpenTargets" id="ENSG00000167117"/>
<dbReference type="VEuPathDB" id="HostDB:ENSG00000167117"/>
<dbReference type="GeneTree" id="ENSGT00390000007792"/>
<dbReference type="InParanoid" id="Q53H64"/>
<dbReference type="OMA" id="GRPENTC"/>
<dbReference type="OrthoDB" id="194358at2759"/>
<dbReference type="PAN-GO" id="Q53H64">
    <property type="GO annotations" value="0 GO annotations based on evolutionary models"/>
</dbReference>
<dbReference type="PathwayCommons" id="Q53H64"/>
<dbReference type="ChiTaRS" id="LINC00483">
    <property type="organism name" value="human"/>
</dbReference>
<dbReference type="Pharos" id="Q53H64">
    <property type="development level" value="Tdark"/>
</dbReference>
<dbReference type="PRO" id="PR:Q53H64"/>
<dbReference type="Proteomes" id="UP000005640">
    <property type="component" value="Chromosome 17"/>
</dbReference>
<dbReference type="RNAct" id="Q53H64">
    <property type="molecule type" value="protein"/>
</dbReference>
<dbReference type="Bgee" id="ENSG00000167117">
    <property type="expression patterns" value="Expressed in mucosa of transverse colon and 66 other cell types or tissues"/>
</dbReference>
<dbReference type="ExpressionAtlas" id="Q53H64">
    <property type="expression patterns" value="baseline and differential"/>
</dbReference>
<dbReference type="InterPro" id="IPR039195">
    <property type="entry name" value="ANKRD40"/>
</dbReference>
<dbReference type="PANTHER" id="PTHR24192:SF2">
    <property type="entry name" value="ANKRD40 C-TERMINAL-LIKE PROTEIN-RELATED"/>
    <property type="match status" value="1"/>
</dbReference>
<dbReference type="PANTHER" id="PTHR24192">
    <property type="entry name" value="ANKYRIN REPEAT DOMAIN 40"/>
    <property type="match status" value="1"/>
</dbReference>
<reference key="1">
    <citation type="journal article" date="2004" name="Nat. Genet.">
        <title>Complete sequencing and characterization of 21,243 full-length human cDNAs.</title>
        <authorList>
            <person name="Ota T."/>
            <person name="Suzuki Y."/>
            <person name="Nishikawa T."/>
            <person name="Otsuki T."/>
            <person name="Sugiyama T."/>
            <person name="Irie R."/>
            <person name="Wakamatsu A."/>
            <person name="Hayashi K."/>
            <person name="Sato H."/>
            <person name="Nagai K."/>
            <person name="Kimura K."/>
            <person name="Makita H."/>
            <person name="Sekine M."/>
            <person name="Obayashi M."/>
            <person name="Nishi T."/>
            <person name="Shibahara T."/>
            <person name="Tanaka T."/>
            <person name="Ishii S."/>
            <person name="Yamamoto J."/>
            <person name="Saito K."/>
            <person name="Kawai Y."/>
            <person name="Isono Y."/>
            <person name="Nakamura Y."/>
            <person name="Nagahari K."/>
            <person name="Murakami K."/>
            <person name="Yasuda T."/>
            <person name="Iwayanagi T."/>
            <person name="Wagatsuma M."/>
            <person name="Shiratori A."/>
            <person name="Sudo H."/>
            <person name="Hosoiri T."/>
            <person name="Kaku Y."/>
            <person name="Kodaira H."/>
            <person name="Kondo H."/>
            <person name="Sugawara M."/>
            <person name="Takahashi M."/>
            <person name="Kanda K."/>
            <person name="Yokoi T."/>
            <person name="Furuya T."/>
            <person name="Kikkawa E."/>
            <person name="Omura Y."/>
            <person name="Abe K."/>
            <person name="Kamihara K."/>
            <person name="Katsuta N."/>
            <person name="Sato K."/>
            <person name="Tanikawa M."/>
            <person name="Yamazaki M."/>
            <person name="Ninomiya K."/>
            <person name="Ishibashi T."/>
            <person name="Yamashita H."/>
            <person name="Murakawa K."/>
            <person name="Fujimori K."/>
            <person name="Tanai H."/>
            <person name="Kimata M."/>
            <person name="Watanabe M."/>
            <person name="Hiraoka S."/>
            <person name="Chiba Y."/>
            <person name="Ishida S."/>
            <person name="Ono Y."/>
            <person name="Takiguchi S."/>
            <person name="Watanabe S."/>
            <person name="Yosida M."/>
            <person name="Hotuta T."/>
            <person name="Kusano J."/>
            <person name="Kanehori K."/>
            <person name="Takahashi-Fujii A."/>
            <person name="Hara H."/>
            <person name="Tanase T.-O."/>
            <person name="Nomura Y."/>
            <person name="Togiya S."/>
            <person name="Komai F."/>
            <person name="Hara R."/>
            <person name="Takeuchi K."/>
            <person name="Arita M."/>
            <person name="Imose N."/>
            <person name="Musashino K."/>
            <person name="Yuuki H."/>
            <person name="Oshima A."/>
            <person name="Sasaki N."/>
            <person name="Aotsuka S."/>
            <person name="Yoshikawa Y."/>
            <person name="Matsunawa H."/>
            <person name="Ichihara T."/>
            <person name="Shiohata N."/>
            <person name="Sano S."/>
            <person name="Moriya S."/>
            <person name="Momiyama H."/>
            <person name="Satoh N."/>
            <person name="Takami S."/>
            <person name="Terashima Y."/>
            <person name="Suzuki O."/>
            <person name="Nakagawa S."/>
            <person name="Senoh A."/>
            <person name="Mizoguchi H."/>
            <person name="Goto Y."/>
            <person name="Shimizu F."/>
            <person name="Wakebe H."/>
            <person name="Hishigaki H."/>
            <person name="Watanabe T."/>
            <person name="Sugiyama A."/>
            <person name="Takemoto M."/>
            <person name="Kawakami B."/>
            <person name="Yamazaki M."/>
            <person name="Watanabe K."/>
            <person name="Kumagai A."/>
            <person name="Itakura S."/>
            <person name="Fukuzumi Y."/>
            <person name="Fujimori Y."/>
            <person name="Komiyama M."/>
            <person name="Tashiro H."/>
            <person name="Tanigami A."/>
            <person name="Fujiwara T."/>
            <person name="Ono T."/>
            <person name="Yamada K."/>
            <person name="Fujii Y."/>
            <person name="Ozaki K."/>
            <person name="Hirao M."/>
            <person name="Ohmori Y."/>
            <person name="Kawabata A."/>
            <person name="Hikiji T."/>
            <person name="Kobatake N."/>
            <person name="Inagaki H."/>
            <person name="Ikema Y."/>
            <person name="Okamoto S."/>
            <person name="Okitani R."/>
            <person name="Kawakami T."/>
            <person name="Noguchi S."/>
            <person name="Itoh T."/>
            <person name="Shigeta K."/>
            <person name="Senba T."/>
            <person name="Matsumura K."/>
            <person name="Nakajima Y."/>
            <person name="Mizuno T."/>
            <person name="Morinaga M."/>
            <person name="Sasaki M."/>
            <person name="Togashi T."/>
            <person name="Oyama M."/>
            <person name="Hata H."/>
            <person name="Watanabe M."/>
            <person name="Komatsu T."/>
            <person name="Mizushima-Sugano J."/>
            <person name="Satoh T."/>
            <person name="Shirai Y."/>
            <person name="Takahashi Y."/>
            <person name="Nakagawa K."/>
            <person name="Okumura K."/>
            <person name="Nagase T."/>
            <person name="Nomura N."/>
            <person name="Kikuchi H."/>
            <person name="Masuho Y."/>
            <person name="Yamashita R."/>
            <person name="Nakai K."/>
            <person name="Yada T."/>
            <person name="Nakamura Y."/>
            <person name="Ohara O."/>
            <person name="Isogai T."/>
            <person name="Sugano S."/>
        </authorList>
    </citation>
    <scope>NUCLEOTIDE SEQUENCE [LARGE SCALE MRNA]</scope>
    <source>
        <tissue>Ileal mucosa</tissue>
    </source>
</reference>
<reference key="2">
    <citation type="submission" date="2005-04" db="EMBL/GenBank/DDBJ databases">
        <authorList>
            <person name="Suzuki Y."/>
            <person name="Sugano S."/>
            <person name="Totoki Y."/>
            <person name="Toyoda A."/>
            <person name="Takeda T."/>
            <person name="Sakaki Y."/>
            <person name="Tanaka A."/>
            <person name="Yokoyama S."/>
        </authorList>
    </citation>
    <scope>NUCLEOTIDE SEQUENCE [LARGE SCALE MRNA]</scope>
    <source>
        <tissue>Colon</tissue>
    </source>
</reference>
<reference key="3">
    <citation type="submission" date="2005-09" db="EMBL/GenBank/DDBJ databases">
        <authorList>
            <person name="Mural R.J."/>
            <person name="Istrail S."/>
            <person name="Sutton G.G."/>
            <person name="Florea L."/>
            <person name="Halpern A.L."/>
            <person name="Mobarry C.M."/>
            <person name="Lippert R."/>
            <person name="Walenz B."/>
            <person name="Shatkay H."/>
            <person name="Dew I."/>
            <person name="Miller J.R."/>
            <person name="Flanigan M.J."/>
            <person name="Edwards N.J."/>
            <person name="Bolanos R."/>
            <person name="Fasulo D."/>
            <person name="Halldorsson B.V."/>
            <person name="Hannenhalli S."/>
            <person name="Turner R."/>
            <person name="Yooseph S."/>
            <person name="Lu F."/>
            <person name="Nusskern D.R."/>
            <person name="Shue B.C."/>
            <person name="Zheng X.H."/>
            <person name="Zhong F."/>
            <person name="Delcher A.L."/>
            <person name="Huson D.H."/>
            <person name="Kravitz S.A."/>
            <person name="Mouchard L."/>
            <person name="Reinert K."/>
            <person name="Remington K.A."/>
            <person name="Clark A.G."/>
            <person name="Waterman M.S."/>
            <person name="Eichler E.E."/>
            <person name="Adams M.D."/>
            <person name="Hunkapiller M.W."/>
            <person name="Myers E.W."/>
            <person name="Venter J.C."/>
        </authorList>
    </citation>
    <scope>NUCLEOTIDE SEQUENCE [LARGE SCALE GENOMIC DNA]</scope>
</reference>
<reference key="4">
    <citation type="journal article" date="2004" name="Genome Res.">
        <title>The status, quality, and expansion of the NIH full-length cDNA project: the Mammalian Gene Collection (MGC).</title>
        <authorList>
            <consortium name="The MGC Project Team"/>
        </authorList>
    </citation>
    <scope>NUCLEOTIDE SEQUENCE [LARGE SCALE MRNA]</scope>
</reference>
<evidence type="ECO:0000305" key="1"/>
<evidence type="ECO:0000312" key="2">
    <source>
        <dbReference type="HGNC" id="HGNC:26080"/>
    </source>
</evidence>
<accession>Q53H64</accession>
<accession>Q9NWQ1</accession>
<gene>
    <name evidence="2" type="primary">ANKRD40CL</name>
    <name evidence="2" type="synonym">C17orf73</name>
    <name evidence="2" type="synonym">LINC00483</name>
</gene>
<organism>
    <name type="scientific">Homo sapiens</name>
    <name type="common">Human</name>
    <dbReference type="NCBI Taxonomy" id="9606"/>
    <lineage>
        <taxon>Eukaryota</taxon>
        <taxon>Metazoa</taxon>
        <taxon>Chordata</taxon>
        <taxon>Craniata</taxon>
        <taxon>Vertebrata</taxon>
        <taxon>Euteleostomi</taxon>
        <taxon>Mammalia</taxon>
        <taxon>Eutheria</taxon>
        <taxon>Euarchontoglires</taxon>
        <taxon>Primates</taxon>
        <taxon>Haplorrhini</taxon>
        <taxon>Catarrhini</taxon>
        <taxon>Hominidae</taxon>
        <taxon>Homo</taxon>
    </lineage>
</organism>
<keyword id="KW-1185">Reference proteome</keyword>
<feature type="chain" id="PRO_0000307315" description="Putative ANKRD40 C-terminal-like protein">
    <location>
        <begin position="1"/>
        <end position="114"/>
    </location>
</feature>
<sequence length="114" mass="13397">MAEPEQDIGEKPAVRIQNPKENDFIEIELKRQELSYQNLLNVSCCELGIKPERVEKIRKLPNTLLRKDKDIRRLRDFQEVELILMKNGSSRLTEYVPSLTERPCYDSKAAKMTY</sequence>
<comment type="sequence caution" evidence="1">
    <conflict type="erroneous gene model prediction">
        <sequence resource="EMBL-CDS" id="BAA91328"/>
    </conflict>
</comment>
<comment type="sequence caution" evidence="1">
    <conflict type="erroneous gene model prediction">
        <sequence resource="EMBL-CDS" id="BAD96437"/>
    </conflict>
</comment>
<comment type="sequence caution" evidence="1">
    <conflict type="erroneous gene model prediction">
        <sequence resource="EMBL-CDS" id="EAW94582"/>
    </conflict>
</comment>
<protein>
    <recommendedName>
        <fullName evidence="1">Putative ANKRD40 C-terminal-like protein</fullName>
    </recommendedName>
</protein>